<accession>B1XM22</accession>
<organism>
    <name type="scientific">Picosynechococcus sp. (strain ATCC 27264 / PCC 7002 / PR-6)</name>
    <name type="common">Agmenellum quadruplicatum</name>
    <dbReference type="NCBI Taxonomy" id="32049"/>
    <lineage>
        <taxon>Bacteria</taxon>
        <taxon>Bacillati</taxon>
        <taxon>Cyanobacteriota</taxon>
        <taxon>Cyanophyceae</taxon>
        <taxon>Oscillatoriophycideae</taxon>
        <taxon>Chroococcales</taxon>
        <taxon>Geminocystaceae</taxon>
        <taxon>Picosynechococcus</taxon>
    </lineage>
</organism>
<feature type="chain" id="PRO_1000094997" description="Deoxyuridine 5'-triphosphate nucleotidohydrolase">
    <location>
        <begin position="1"/>
        <end position="142"/>
    </location>
</feature>
<feature type="binding site" evidence="1">
    <location>
        <begin position="62"/>
        <end position="64"/>
    </location>
    <ligand>
        <name>substrate</name>
    </ligand>
</feature>
<feature type="binding site" evidence="1">
    <location>
        <position position="75"/>
    </location>
    <ligand>
        <name>substrate</name>
    </ligand>
</feature>
<feature type="binding site" evidence="1">
    <location>
        <begin position="79"/>
        <end position="81"/>
    </location>
    <ligand>
        <name>substrate</name>
    </ligand>
</feature>
<proteinExistence type="inferred from homology"/>
<protein>
    <recommendedName>
        <fullName evidence="1">Deoxyuridine 5'-triphosphate nucleotidohydrolase</fullName>
        <shortName evidence="1">dUTPase</shortName>
        <ecNumber evidence="1">3.6.1.23</ecNumber>
    </recommendedName>
    <alternativeName>
        <fullName evidence="1">dUTP pyrophosphatase</fullName>
    </alternativeName>
</protein>
<sequence length="142" mass="15149">MHLRLLKLHPNAIIPKYQHEGDSGVDLHAIEPVAIAPHKTALIKTGLAAEIPIGTELQIRPRSGLALKQSVTVLNSPGTIDANYRGEIGVILINHSDTVFEVKAGMRIAQMVMVPVMHLDITVVDKVSDTSRGTGGFGSTGT</sequence>
<reference key="1">
    <citation type="submission" date="2008-02" db="EMBL/GenBank/DDBJ databases">
        <title>Complete sequence of Synechococcus sp. PCC 7002.</title>
        <authorList>
            <person name="Li T."/>
            <person name="Zhao J."/>
            <person name="Zhao C."/>
            <person name="Liu Z."/>
            <person name="Zhao F."/>
            <person name="Marquardt J."/>
            <person name="Nomura C.T."/>
            <person name="Persson S."/>
            <person name="Detter J.C."/>
            <person name="Richardson P.M."/>
            <person name="Lanz C."/>
            <person name="Schuster S.C."/>
            <person name="Wang J."/>
            <person name="Li S."/>
            <person name="Huang X."/>
            <person name="Cai T."/>
            <person name="Yu Z."/>
            <person name="Luo J."/>
            <person name="Zhao J."/>
            <person name="Bryant D.A."/>
        </authorList>
    </citation>
    <scope>NUCLEOTIDE SEQUENCE [LARGE SCALE GENOMIC DNA]</scope>
    <source>
        <strain>ATCC 27264 / PCC 7002 / PR-6</strain>
    </source>
</reference>
<evidence type="ECO:0000255" key="1">
    <source>
        <dbReference type="HAMAP-Rule" id="MF_00116"/>
    </source>
</evidence>
<dbReference type="EC" id="3.6.1.23" evidence="1"/>
<dbReference type="EMBL" id="CP000951">
    <property type="protein sequence ID" value="ACA98169.1"/>
    <property type="molecule type" value="Genomic_DNA"/>
</dbReference>
<dbReference type="RefSeq" id="WP_012305793.1">
    <property type="nucleotide sequence ID" value="NZ_JAHHPU010000005.1"/>
</dbReference>
<dbReference type="SMR" id="B1XM22"/>
<dbReference type="STRING" id="32049.SYNPCC7002_A0155"/>
<dbReference type="KEGG" id="syp:SYNPCC7002_A0155"/>
<dbReference type="eggNOG" id="COG0756">
    <property type="taxonomic scope" value="Bacteria"/>
</dbReference>
<dbReference type="HOGENOM" id="CLU_068508_1_2_3"/>
<dbReference type="UniPathway" id="UPA00610">
    <property type="reaction ID" value="UER00666"/>
</dbReference>
<dbReference type="Proteomes" id="UP000001688">
    <property type="component" value="Chromosome"/>
</dbReference>
<dbReference type="GO" id="GO:0004170">
    <property type="term" value="F:dUTP diphosphatase activity"/>
    <property type="evidence" value="ECO:0007669"/>
    <property type="project" value="UniProtKB-UniRule"/>
</dbReference>
<dbReference type="GO" id="GO:0000287">
    <property type="term" value="F:magnesium ion binding"/>
    <property type="evidence" value="ECO:0007669"/>
    <property type="project" value="UniProtKB-UniRule"/>
</dbReference>
<dbReference type="GO" id="GO:0006226">
    <property type="term" value="P:dUMP biosynthetic process"/>
    <property type="evidence" value="ECO:0007669"/>
    <property type="project" value="UniProtKB-UniRule"/>
</dbReference>
<dbReference type="GO" id="GO:0046081">
    <property type="term" value="P:dUTP catabolic process"/>
    <property type="evidence" value="ECO:0007669"/>
    <property type="project" value="InterPro"/>
</dbReference>
<dbReference type="CDD" id="cd07557">
    <property type="entry name" value="trimeric_dUTPase"/>
    <property type="match status" value="1"/>
</dbReference>
<dbReference type="Gene3D" id="2.70.40.10">
    <property type="match status" value="1"/>
</dbReference>
<dbReference type="HAMAP" id="MF_00116">
    <property type="entry name" value="dUTPase_bact"/>
    <property type="match status" value="1"/>
</dbReference>
<dbReference type="InterPro" id="IPR008181">
    <property type="entry name" value="dUTPase"/>
</dbReference>
<dbReference type="InterPro" id="IPR029054">
    <property type="entry name" value="dUTPase-like"/>
</dbReference>
<dbReference type="InterPro" id="IPR036157">
    <property type="entry name" value="dUTPase-like_sf"/>
</dbReference>
<dbReference type="InterPro" id="IPR033704">
    <property type="entry name" value="dUTPase_trimeric"/>
</dbReference>
<dbReference type="NCBIfam" id="TIGR00576">
    <property type="entry name" value="dut"/>
    <property type="match status" value="1"/>
</dbReference>
<dbReference type="NCBIfam" id="NF001862">
    <property type="entry name" value="PRK00601.1"/>
    <property type="match status" value="1"/>
</dbReference>
<dbReference type="PANTHER" id="PTHR11241">
    <property type="entry name" value="DEOXYURIDINE 5'-TRIPHOSPHATE NUCLEOTIDOHYDROLASE"/>
    <property type="match status" value="1"/>
</dbReference>
<dbReference type="PANTHER" id="PTHR11241:SF0">
    <property type="entry name" value="DEOXYURIDINE 5'-TRIPHOSPHATE NUCLEOTIDOHYDROLASE"/>
    <property type="match status" value="1"/>
</dbReference>
<dbReference type="Pfam" id="PF00692">
    <property type="entry name" value="dUTPase"/>
    <property type="match status" value="1"/>
</dbReference>
<dbReference type="SUPFAM" id="SSF51283">
    <property type="entry name" value="dUTPase-like"/>
    <property type="match status" value="1"/>
</dbReference>
<comment type="function">
    <text evidence="1">This enzyme is involved in nucleotide metabolism: it produces dUMP, the immediate precursor of thymidine nucleotides and it decreases the intracellular concentration of dUTP so that uracil cannot be incorporated into DNA.</text>
</comment>
<comment type="catalytic activity">
    <reaction evidence="1">
        <text>dUTP + H2O = dUMP + diphosphate + H(+)</text>
        <dbReference type="Rhea" id="RHEA:10248"/>
        <dbReference type="ChEBI" id="CHEBI:15377"/>
        <dbReference type="ChEBI" id="CHEBI:15378"/>
        <dbReference type="ChEBI" id="CHEBI:33019"/>
        <dbReference type="ChEBI" id="CHEBI:61555"/>
        <dbReference type="ChEBI" id="CHEBI:246422"/>
        <dbReference type="EC" id="3.6.1.23"/>
    </reaction>
</comment>
<comment type="cofactor">
    <cofactor evidence="1">
        <name>Mg(2+)</name>
        <dbReference type="ChEBI" id="CHEBI:18420"/>
    </cofactor>
</comment>
<comment type="pathway">
    <text evidence="1">Pyrimidine metabolism; dUMP biosynthesis; dUMP from dCTP (dUTP route): step 2/2.</text>
</comment>
<comment type="similarity">
    <text evidence="1">Belongs to the dUTPase family.</text>
</comment>
<name>DUT_PICP2</name>
<keyword id="KW-0378">Hydrolase</keyword>
<keyword id="KW-0460">Magnesium</keyword>
<keyword id="KW-0479">Metal-binding</keyword>
<keyword id="KW-0546">Nucleotide metabolism</keyword>
<keyword id="KW-1185">Reference proteome</keyword>
<gene>
    <name evidence="1" type="primary">dut</name>
    <name type="ordered locus">SYNPCC7002_A0155</name>
</gene>